<gene>
    <name evidence="5" type="primary">ELS</name>
</gene>
<feature type="transit peptide" description="Chloroplast" evidence="3">
    <location>
        <begin position="1"/>
        <end position="32"/>
    </location>
</feature>
<feature type="chain" id="PRO_0000449305" description="9,13-epoxylabda-14-ene synthase, chloroplastic">
    <location>
        <begin position="33"/>
        <end position="580"/>
    </location>
</feature>
<feature type="short sequence motif" description="DDXXD motif" evidence="1">
    <location>
        <begin position="322"/>
        <end position="326"/>
    </location>
</feature>
<feature type="binding site" evidence="2">
    <location>
        <position position="322"/>
    </location>
    <ligand>
        <name>Mg(2+)</name>
        <dbReference type="ChEBI" id="CHEBI:18420"/>
        <label>1</label>
    </ligand>
</feature>
<feature type="binding site" evidence="2">
    <location>
        <position position="322"/>
    </location>
    <ligand>
        <name>Mg(2+)</name>
        <dbReference type="ChEBI" id="CHEBI:18420"/>
        <label>2</label>
    </ligand>
</feature>
<feature type="binding site" evidence="2">
    <location>
        <position position="326"/>
    </location>
    <ligand>
        <name>Mg(2+)</name>
        <dbReference type="ChEBI" id="CHEBI:18420"/>
        <label>1</label>
    </ligand>
</feature>
<feature type="binding site" evidence="2">
    <location>
        <position position="326"/>
    </location>
    <ligand>
        <name>Mg(2+)</name>
        <dbReference type="ChEBI" id="CHEBI:18420"/>
        <label>2</label>
    </ligand>
</feature>
<feature type="binding site" evidence="2">
    <location>
        <position position="466"/>
    </location>
    <ligand>
        <name>Mg(2+)</name>
        <dbReference type="ChEBI" id="CHEBI:18420"/>
        <label>3</label>
    </ligand>
</feature>
<feature type="binding site" evidence="2">
    <location>
        <position position="470"/>
    </location>
    <ligand>
        <name>Mg(2+)</name>
        <dbReference type="ChEBI" id="CHEBI:18420"/>
        <label>3</label>
    </ligand>
</feature>
<feature type="binding site" evidence="2">
    <location>
        <position position="474"/>
    </location>
    <ligand>
        <name>Mg(2+)</name>
        <dbReference type="ChEBI" id="CHEBI:18420"/>
        <label>3</label>
    </ligand>
</feature>
<comment type="function">
    <text evidence="4 7">Involved in the biosynthesis of labdane-type diterpenoid including marrubiin and other labdane-related furanoid diterpenoids with potential applications as anti-diabetics, analgesics or vasorelaxants (Probable). Terpene synthase the catalyzes the conversion of peregrinol diphosphate to 9,13(R)-epoxy-labd-14-ene, from (+)-copalyl diphosphate ((+)-CPP) to miltiradiene and from 8-hydroxycopalyl diphosphate (LPP, labda-13-en-8-ol diphosphate) to manoyl oxide (PubMed:24990389).</text>
</comment>
<comment type="catalytic activity">
    <reaction evidence="4">
        <text>peregrinol diphosphate = (13R)-9,13-epoxylabd-14-ene + diphosphate</text>
        <dbReference type="Rhea" id="RHEA:54512"/>
        <dbReference type="ChEBI" id="CHEBI:33019"/>
        <dbReference type="ChEBI" id="CHEBI:138232"/>
        <dbReference type="ChEBI" id="CHEBI:138233"/>
        <dbReference type="EC" id="4.2.3.189"/>
    </reaction>
</comment>
<comment type="catalytic activity">
    <reaction evidence="4">
        <text>(+)-copalyl diphosphate = miltiradiene + diphosphate</text>
        <dbReference type="Rhea" id="RHEA:33983"/>
        <dbReference type="ChEBI" id="CHEBI:33019"/>
        <dbReference type="ChEBI" id="CHEBI:58635"/>
        <dbReference type="ChEBI" id="CHEBI:65037"/>
        <dbReference type="EC" id="4.2.3.131"/>
    </reaction>
    <physiologicalReaction direction="left-to-right" evidence="4">
        <dbReference type="Rhea" id="RHEA:33984"/>
    </physiologicalReaction>
</comment>
<comment type="catalytic activity">
    <reaction evidence="4">
        <text>8-hydroxycopalyl diphosphate = (13R)-manoyl oxide + diphosphate</text>
        <dbReference type="Rhea" id="RHEA:54516"/>
        <dbReference type="ChEBI" id="CHEBI:33019"/>
        <dbReference type="ChEBI" id="CHEBI:64283"/>
        <dbReference type="ChEBI" id="CHEBI:138234"/>
        <dbReference type="EC" id="4.2.3.190"/>
    </reaction>
</comment>
<comment type="cofactor">
    <cofactor evidence="2">
        <name>Mg(2+)</name>
        <dbReference type="ChEBI" id="CHEBI:18420"/>
    </cofactor>
    <text evidence="2">Binds 3 Mg(2+) ions per subunit.</text>
</comment>
<comment type="pathway">
    <text evidence="7">Secondary metabolite biosynthesis; terpenoid biosynthesis.</text>
</comment>
<comment type="subcellular location">
    <subcellularLocation>
        <location evidence="3">Plastid</location>
        <location evidence="3">Chloroplast</location>
    </subcellularLocation>
</comment>
<comment type="tissue specificity">
    <text evidence="4">Present in both leaves and flowers, with higher levels in leaves.</text>
</comment>
<comment type="domain">
    <text evidence="1">The Asp-Asp-Xaa-Xaa-Asp/Glu (DDXXD/E) motif is important for the catalytic activity, presumably through binding to Mg(2+).</text>
</comment>
<comment type="similarity">
    <text evidence="6">Belongs to the terpene synthase family.</text>
</comment>
<organism>
    <name type="scientific">Marrubium vulgare</name>
    <name type="common">White horehound</name>
    <dbReference type="NCBI Taxonomy" id="41230"/>
    <lineage>
        <taxon>Eukaryota</taxon>
        <taxon>Viridiplantae</taxon>
        <taxon>Streptophyta</taxon>
        <taxon>Embryophyta</taxon>
        <taxon>Tracheophyta</taxon>
        <taxon>Spermatophyta</taxon>
        <taxon>Magnoliopsida</taxon>
        <taxon>eudicotyledons</taxon>
        <taxon>Gunneridae</taxon>
        <taxon>Pentapetalae</taxon>
        <taxon>asterids</taxon>
        <taxon>lamiids</taxon>
        <taxon>Lamiales</taxon>
        <taxon>Lamiaceae</taxon>
        <taxon>Lamioideae</taxon>
        <taxon>Marrubieae</taxon>
        <taxon>Marrubium</taxon>
    </lineage>
</organism>
<sequence length="580" mass="67098">MSITFNLKIAPFSGPGIQRSKETFPATEIQITASTKSTMTTKCSFNASTDFMGKLREKVGGKADKPPVVIHPVDISSNLCMIDTLQSLGVDRYFQSEINTLLEHTYRLWKEKKKNIIFKDVSCCAIAFRLLREKGYQVSSDKLAPFADYRIRDVATILELYRASQARLYEDEHTLEKLHDWSSNLLKQHLLNGSIPDHKLHKQVEYFLKNYHGILDRVAVRRSLDLYNINHHHRIPDVADGFPKEDFLEYSMQDFNICQAQQQEELHQLQRWYADCRLDTLNYGRDVVRIANFLTSAIFGEPEFSDARLAFAKHIILVTRIDDFFDHGGSREESYKILDLVQEWKEKPAEEYGSKEVEILFTAVYNTVNDLAEKAHIEQGRCVKPLLIKLWVEILTSFKKELDSWTEETALTLDEYLSSSWVSIGCRICILNSLQYLGIKLSEEMLSSQECTDLCRHVSSVDRLLNDVQTFKKERLENTINSVGLQLAAHKGERAMTEEDAMSKIKEMADYHRRKLMQIVYKEGTVFPRECKDVFLRVCRIGYYLYSSGDEFTSPQQMKEDMKSLVYQPVKIHPLEAINV</sequence>
<name>ELS_MARVU</name>
<evidence type="ECO:0000250" key="1">
    <source>
        <dbReference type="UniProtKB" id="G8GJ94"/>
    </source>
</evidence>
<evidence type="ECO:0000250" key="2">
    <source>
        <dbReference type="UniProtKB" id="Q40577"/>
    </source>
</evidence>
<evidence type="ECO:0000255" key="3"/>
<evidence type="ECO:0000269" key="4">
    <source>
    </source>
</evidence>
<evidence type="ECO:0000303" key="5">
    <source>
    </source>
</evidence>
<evidence type="ECO:0000305" key="6"/>
<evidence type="ECO:0000305" key="7">
    <source>
    </source>
</evidence>
<dbReference type="EC" id="4.2.3.189" evidence="4"/>
<dbReference type="EC" id="4.2.3.190" evidence="4"/>
<dbReference type="EC" id="4.2.3.131" evidence="4"/>
<dbReference type="EMBL" id="KJ584454">
    <property type="protein sequence ID" value="AIE77094.1"/>
    <property type="molecule type" value="mRNA"/>
</dbReference>
<dbReference type="SMR" id="A0A075FBG7"/>
<dbReference type="KEGG" id="ag:AIE77094"/>
<dbReference type="BRENDA" id="4.2.3.189">
    <property type="organism ID" value="15343"/>
</dbReference>
<dbReference type="BRENDA" id="4.2.3.190">
    <property type="organism ID" value="15343"/>
</dbReference>
<dbReference type="UniPathway" id="UPA00213"/>
<dbReference type="GO" id="GO:0009507">
    <property type="term" value="C:chloroplast"/>
    <property type="evidence" value="ECO:0007669"/>
    <property type="project" value="UniProtKB-SubCell"/>
</dbReference>
<dbReference type="GO" id="GO:0106239">
    <property type="term" value="F:9,13-epoxylabda-14-ene synthase activity"/>
    <property type="evidence" value="ECO:0000314"/>
    <property type="project" value="UniProtKB"/>
</dbReference>
<dbReference type="GO" id="GO:0000287">
    <property type="term" value="F:magnesium ion binding"/>
    <property type="evidence" value="ECO:0007669"/>
    <property type="project" value="InterPro"/>
</dbReference>
<dbReference type="GO" id="GO:0062206">
    <property type="term" value="F:manoyl oxide synthase activity"/>
    <property type="evidence" value="ECO:0000314"/>
    <property type="project" value="UniProtKB"/>
</dbReference>
<dbReference type="GO" id="GO:0062205">
    <property type="term" value="F:miltiradiene synthase activity"/>
    <property type="evidence" value="ECO:0000314"/>
    <property type="project" value="UniProtKB"/>
</dbReference>
<dbReference type="GO" id="GO:0010333">
    <property type="term" value="F:terpene synthase activity"/>
    <property type="evidence" value="ECO:0007669"/>
    <property type="project" value="InterPro"/>
</dbReference>
<dbReference type="GO" id="GO:0009686">
    <property type="term" value="P:gibberellin biosynthetic process"/>
    <property type="evidence" value="ECO:0007669"/>
    <property type="project" value="TreeGrafter"/>
</dbReference>
<dbReference type="GO" id="GO:1901946">
    <property type="term" value="P:miltiradiene biosynthetic process"/>
    <property type="evidence" value="ECO:0000314"/>
    <property type="project" value="UniProtKB"/>
</dbReference>
<dbReference type="FunFam" id="1.10.600.10:FF:000005">
    <property type="entry name" value="Ent-kaur-16-ene synthase, chloroplastic"/>
    <property type="match status" value="1"/>
</dbReference>
<dbReference type="Gene3D" id="1.10.600.10">
    <property type="entry name" value="Farnesyl Diphosphate Synthase"/>
    <property type="match status" value="1"/>
</dbReference>
<dbReference type="Gene3D" id="1.50.10.130">
    <property type="entry name" value="Terpene synthase, N-terminal domain"/>
    <property type="match status" value="1"/>
</dbReference>
<dbReference type="InterPro" id="IPR008949">
    <property type="entry name" value="Isoprenoid_synthase_dom_sf"/>
</dbReference>
<dbReference type="InterPro" id="IPR001906">
    <property type="entry name" value="Terpene_synth_N"/>
</dbReference>
<dbReference type="InterPro" id="IPR036965">
    <property type="entry name" value="Terpene_synth_N_sf"/>
</dbReference>
<dbReference type="InterPro" id="IPR050148">
    <property type="entry name" value="Terpene_synthase-like"/>
</dbReference>
<dbReference type="InterPro" id="IPR005630">
    <property type="entry name" value="Terpene_synthase_metal-bd"/>
</dbReference>
<dbReference type="InterPro" id="IPR008930">
    <property type="entry name" value="Terpenoid_cyclase/PrenylTrfase"/>
</dbReference>
<dbReference type="PANTHER" id="PTHR31739:SF33">
    <property type="entry name" value="CIS-ABIENOL SYNTHASE, CHLOROPLASTIC"/>
    <property type="match status" value="1"/>
</dbReference>
<dbReference type="PANTHER" id="PTHR31739">
    <property type="entry name" value="ENT-COPALYL DIPHOSPHATE SYNTHASE, CHLOROPLASTIC"/>
    <property type="match status" value="1"/>
</dbReference>
<dbReference type="Pfam" id="PF01397">
    <property type="entry name" value="Terpene_synth"/>
    <property type="match status" value="1"/>
</dbReference>
<dbReference type="Pfam" id="PF03936">
    <property type="entry name" value="Terpene_synth_C"/>
    <property type="match status" value="1"/>
</dbReference>
<dbReference type="SUPFAM" id="SSF48239">
    <property type="entry name" value="Terpenoid cyclases/Protein prenyltransferases"/>
    <property type="match status" value="1"/>
</dbReference>
<dbReference type="SUPFAM" id="SSF48576">
    <property type="entry name" value="Terpenoid synthases"/>
    <property type="match status" value="1"/>
</dbReference>
<keyword id="KW-0150">Chloroplast</keyword>
<keyword id="KW-0456">Lyase</keyword>
<keyword id="KW-0460">Magnesium</keyword>
<keyword id="KW-0479">Metal-binding</keyword>
<keyword id="KW-0934">Plastid</keyword>
<keyword id="KW-0809">Transit peptide</keyword>
<accession>A0A075FBG7</accession>
<protein>
    <recommendedName>
        <fullName evidence="5">9,13-epoxylabda-14-ene synthase, chloroplastic</fullName>
        <ecNumber evidence="4">4.2.3.189</ecNumber>
    </recommendedName>
    <alternativeName>
        <fullName evidence="5">Manoyl oxide synthase</fullName>
        <ecNumber evidence="4">4.2.3.190</ecNumber>
    </alternativeName>
    <alternativeName>
        <fullName evidence="5">Miltiradiene synthase</fullName>
        <ecNumber evidence="4">4.2.3.131</ecNumber>
    </alternativeName>
</protein>
<reference key="1">
    <citation type="journal article" date="2014" name="Plant J.">
        <title>Diterpene synthases of the biosynthetic system of medicinally active diterpenoids in Marrubium vulgare.</title>
        <authorList>
            <person name="Zerbe P."/>
            <person name="Chiang A."/>
            <person name="Dullat H."/>
            <person name="O'Neil-Johnson M."/>
            <person name="Starks C."/>
            <person name="Hamberger B."/>
            <person name="Bohlmann J."/>
        </authorList>
    </citation>
    <scope>NUCLEOTIDE SEQUENCE [MRNA]</scope>
    <scope>FUNCTION</scope>
    <scope>CATALYTIC ACTIVITY</scope>
    <scope>PATHWAY</scope>
    <scope>TISSUE SPECIFICITY</scope>
</reference>
<proteinExistence type="evidence at protein level"/>